<proteinExistence type="inferred from homology"/>
<sequence length="218" mass="25178">MGQKINPLGFRLGTTQSHHSLWFAQPKKYSEGLEEDKKIRDCIKNYVQNNIRISSGMEGIARIEIQKRIDLIQIIIYMGFPKLLIEDKPRRIEELQINVQKELNCVNRKLNIAITRISNPYGHPNILAEFIAGQLKNRVSFRKAMKKAIELTEQANTKGIQVQIAGRIDGKEIARVEWIREGRVPLQTIDAKIDYCSYTVRTIYGVLGIKIWIFVDEE</sequence>
<accession>A4QL57</accession>
<keyword id="KW-0150">Chloroplast</keyword>
<keyword id="KW-0934">Plastid</keyword>
<keyword id="KW-0687">Ribonucleoprotein</keyword>
<keyword id="KW-0689">Ribosomal protein</keyword>
<keyword id="KW-0694">RNA-binding</keyword>
<keyword id="KW-0699">rRNA-binding</keyword>
<feature type="chain" id="PRO_0000293942" description="Small ribosomal subunit protein uS3c">
    <location>
        <begin position="1"/>
        <end position="218"/>
    </location>
</feature>
<feature type="domain" description="KH type-2">
    <location>
        <begin position="47"/>
        <end position="118"/>
    </location>
</feature>
<geneLocation type="chloroplast"/>
<protein>
    <recommendedName>
        <fullName evidence="2">Small ribosomal subunit protein uS3c</fullName>
    </recommendedName>
    <alternativeName>
        <fullName>30S ribosomal protein S3, chloroplastic</fullName>
    </alternativeName>
</protein>
<name>RR3_DRANE</name>
<reference key="1">
    <citation type="submission" date="2007-03" db="EMBL/GenBank/DDBJ databases">
        <title>Sequencing analysis of Draba nemoroza chloroplast DNA.</title>
        <authorList>
            <person name="Hosouchi T."/>
            <person name="Tsuruoka H."/>
            <person name="Kotani H."/>
        </authorList>
    </citation>
    <scope>NUCLEOTIDE SEQUENCE [LARGE SCALE GENOMIC DNA]</scope>
</reference>
<organism>
    <name type="scientific">Draba nemorosa</name>
    <name type="common">Woodland whitlowgrass</name>
    <dbReference type="NCBI Taxonomy" id="171822"/>
    <lineage>
        <taxon>Eukaryota</taxon>
        <taxon>Viridiplantae</taxon>
        <taxon>Streptophyta</taxon>
        <taxon>Embryophyta</taxon>
        <taxon>Tracheophyta</taxon>
        <taxon>Spermatophyta</taxon>
        <taxon>Magnoliopsida</taxon>
        <taxon>eudicotyledons</taxon>
        <taxon>Gunneridae</taxon>
        <taxon>Pentapetalae</taxon>
        <taxon>rosids</taxon>
        <taxon>malvids</taxon>
        <taxon>Brassicales</taxon>
        <taxon>Brassicaceae</taxon>
        <taxon>Arabideae</taxon>
        <taxon>Draba</taxon>
    </lineage>
</organism>
<evidence type="ECO:0000250" key="1"/>
<evidence type="ECO:0000305" key="2"/>
<gene>
    <name type="primary">rps3</name>
</gene>
<dbReference type="EMBL" id="AP009373">
    <property type="protein sequence ID" value="BAF50412.1"/>
    <property type="molecule type" value="Genomic_DNA"/>
</dbReference>
<dbReference type="RefSeq" id="YP_001123588.1">
    <property type="nucleotide sequence ID" value="NC_009272.1"/>
</dbReference>
<dbReference type="SMR" id="A4QL57"/>
<dbReference type="GeneID" id="4964729"/>
<dbReference type="GO" id="GO:0009507">
    <property type="term" value="C:chloroplast"/>
    <property type="evidence" value="ECO:0007669"/>
    <property type="project" value="UniProtKB-SubCell"/>
</dbReference>
<dbReference type="GO" id="GO:0022627">
    <property type="term" value="C:cytosolic small ribosomal subunit"/>
    <property type="evidence" value="ECO:0007669"/>
    <property type="project" value="TreeGrafter"/>
</dbReference>
<dbReference type="GO" id="GO:0019843">
    <property type="term" value="F:rRNA binding"/>
    <property type="evidence" value="ECO:0007669"/>
    <property type="project" value="UniProtKB-UniRule"/>
</dbReference>
<dbReference type="GO" id="GO:0003735">
    <property type="term" value="F:structural constituent of ribosome"/>
    <property type="evidence" value="ECO:0007669"/>
    <property type="project" value="InterPro"/>
</dbReference>
<dbReference type="GO" id="GO:0006412">
    <property type="term" value="P:translation"/>
    <property type="evidence" value="ECO:0007669"/>
    <property type="project" value="UniProtKB-UniRule"/>
</dbReference>
<dbReference type="CDD" id="cd02412">
    <property type="entry name" value="KH-II_30S_S3"/>
    <property type="match status" value="1"/>
</dbReference>
<dbReference type="FunFam" id="3.30.1140.32:FF:000003">
    <property type="entry name" value="30S ribosomal protein S3, chloroplastic"/>
    <property type="match status" value="1"/>
</dbReference>
<dbReference type="FunFam" id="3.30.300.20:FF:000008">
    <property type="entry name" value="30S ribosomal protein S3, chloroplastic"/>
    <property type="match status" value="1"/>
</dbReference>
<dbReference type="Gene3D" id="3.30.300.20">
    <property type="match status" value="1"/>
</dbReference>
<dbReference type="Gene3D" id="3.30.1140.32">
    <property type="entry name" value="Ribosomal protein S3, C-terminal domain"/>
    <property type="match status" value="1"/>
</dbReference>
<dbReference type="HAMAP" id="MF_01309_B">
    <property type="entry name" value="Ribosomal_uS3_B"/>
    <property type="match status" value="1"/>
</dbReference>
<dbReference type="InterPro" id="IPR015946">
    <property type="entry name" value="KH_dom-like_a/b"/>
</dbReference>
<dbReference type="InterPro" id="IPR004044">
    <property type="entry name" value="KH_dom_type_2"/>
</dbReference>
<dbReference type="InterPro" id="IPR009019">
    <property type="entry name" value="KH_sf_prok-type"/>
</dbReference>
<dbReference type="InterPro" id="IPR036419">
    <property type="entry name" value="Ribosomal_S3_C_sf"/>
</dbReference>
<dbReference type="InterPro" id="IPR005704">
    <property type="entry name" value="Ribosomal_uS3_bac-typ"/>
</dbReference>
<dbReference type="InterPro" id="IPR001351">
    <property type="entry name" value="Ribosomal_uS3_C"/>
</dbReference>
<dbReference type="InterPro" id="IPR018280">
    <property type="entry name" value="Ribosomal_uS3_CS"/>
</dbReference>
<dbReference type="NCBIfam" id="TIGR01009">
    <property type="entry name" value="rpsC_bact"/>
    <property type="match status" value="1"/>
</dbReference>
<dbReference type="PANTHER" id="PTHR11760">
    <property type="entry name" value="30S/40S RIBOSOMAL PROTEIN S3"/>
    <property type="match status" value="1"/>
</dbReference>
<dbReference type="PANTHER" id="PTHR11760:SF19">
    <property type="entry name" value="SMALL RIBOSOMAL SUBUNIT PROTEIN US3C"/>
    <property type="match status" value="1"/>
</dbReference>
<dbReference type="Pfam" id="PF00189">
    <property type="entry name" value="Ribosomal_S3_C"/>
    <property type="match status" value="1"/>
</dbReference>
<dbReference type="SUPFAM" id="SSF54814">
    <property type="entry name" value="Prokaryotic type KH domain (KH-domain type II)"/>
    <property type="match status" value="1"/>
</dbReference>
<dbReference type="SUPFAM" id="SSF54821">
    <property type="entry name" value="Ribosomal protein S3 C-terminal domain"/>
    <property type="match status" value="1"/>
</dbReference>
<dbReference type="PROSITE" id="PS50823">
    <property type="entry name" value="KH_TYPE_2"/>
    <property type="match status" value="1"/>
</dbReference>
<dbReference type="PROSITE" id="PS00548">
    <property type="entry name" value="RIBOSOMAL_S3"/>
    <property type="match status" value="1"/>
</dbReference>
<comment type="subunit">
    <text evidence="1">Part of the 30S ribosomal subunit.</text>
</comment>
<comment type="subcellular location">
    <subcellularLocation>
        <location>Plastid</location>
        <location>Chloroplast</location>
    </subcellularLocation>
</comment>
<comment type="similarity">
    <text evidence="2">Belongs to the universal ribosomal protein uS3 family.</text>
</comment>